<gene>
    <name evidence="1" type="primary">truA</name>
    <name type="ordered locus">SaurJH1_2287</name>
</gene>
<name>TRUA_STAA2</name>
<evidence type="ECO:0000255" key="1">
    <source>
        <dbReference type="HAMAP-Rule" id="MF_00171"/>
    </source>
</evidence>
<organism>
    <name type="scientific">Staphylococcus aureus (strain JH1)</name>
    <dbReference type="NCBI Taxonomy" id="359787"/>
    <lineage>
        <taxon>Bacteria</taxon>
        <taxon>Bacillati</taxon>
        <taxon>Bacillota</taxon>
        <taxon>Bacilli</taxon>
        <taxon>Bacillales</taxon>
        <taxon>Staphylococcaceae</taxon>
        <taxon>Staphylococcus</taxon>
    </lineage>
</organism>
<feature type="chain" id="PRO_1000077105" description="tRNA pseudouridine synthase A">
    <location>
        <begin position="1"/>
        <end position="267"/>
    </location>
</feature>
<feature type="active site" description="Nucleophile" evidence="1">
    <location>
        <position position="51"/>
    </location>
</feature>
<feature type="binding site" evidence="1">
    <location>
        <position position="109"/>
    </location>
    <ligand>
        <name>substrate</name>
    </ligand>
</feature>
<proteinExistence type="inferred from homology"/>
<comment type="function">
    <text evidence="1">Formation of pseudouridine at positions 38, 39 and 40 in the anticodon stem and loop of transfer RNAs.</text>
</comment>
<comment type="catalytic activity">
    <reaction evidence="1">
        <text>uridine(38/39/40) in tRNA = pseudouridine(38/39/40) in tRNA</text>
        <dbReference type="Rhea" id="RHEA:22376"/>
        <dbReference type="Rhea" id="RHEA-COMP:10085"/>
        <dbReference type="Rhea" id="RHEA-COMP:10087"/>
        <dbReference type="ChEBI" id="CHEBI:65314"/>
        <dbReference type="ChEBI" id="CHEBI:65315"/>
        <dbReference type="EC" id="5.4.99.12"/>
    </reaction>
</comment>
<comment type="subunit">
    <text evidence="1">Homodimer.</text>
</comment>
<comment type="similarity">
    <text evidence="1">Belongs to the tRNA pseudouridine synthase TruA family.</text>
</comment>
<protein>
    <recommendedName>
        <fullName evidence="1">tRNA pseudouridine synthase A</fullName>
        <ecNumber evidence="1">5.4.99.12</ecNumber>
    </recommendedName>
    <alternativeName>
        <fullName evidence="1">tRNA pseudouridine(38-40) synthase</fullName>
    </alternativeName>
    <alternativeName>
        <fullName evidence="1">tRNA pseudouridylate synthase I</fullName>
    </alternativeName>
    <alternativeName>
        <fullName evidence="1">tRNA-uridine isomerase I</fullName>
    </alternativeName>
</protein>
<reference key="1">
    <citation type="submission" date="2007-06" db="EMBL/GenBank/DDBJ databases">
        <title>Complete sequence of chromosome of Staphylococcus aureus subsp. aureus JH1.</title>
        <authorList>
            <consortium name="US DOE Joint Genome Institute"/>
            <person name="Copeland A."/>
            <person name="Lucas S."/>
            <person name="Lapidus A."/>
            <person name="Barry K."/>
            <person name="Detter J.C."/>
            <person name="Glavina del Rio T."/>
            <person name="Hammon N."/>
            <person name="Israni S."/>
            <person name="Dalin E."/>
            <person name="Tice H."/>
            <person name="Pitluck S."/>
            <person name="Chain P."/>
            <person name="Malfatti S."/>
            <person name="Shin M."/>
            <person name="Vergez L."/>
            <person name="Schmutz J."/>
            <person name="Larimer F."/>
            <person name="Land M."/>
            <person name="Hauser L."/>
            <person name="Kyrpides N."/>
            <person name="Ivanova N."/>
            <person name="Tomasz A."/>
            <person name="Richardson P."/>
        </authorList>
    </citation>
    <scope>NUCLEOTIDE SEQUENCE [LARGE SCALE GENOMIC DNA]</scope>
    <source>
        <strain>JH1</strain>
    </source>
</reference>
<dbReference type="EC" id="5.4.99.12" evidence="1"/>
<dbReference type="EMBL" id="CP000736">
    <property type="protein sequence ID" value="ABR53112.1"/>
    <property type="molecule type" value="Genomic_DNA"/>
</dbReference>
<dbReference type="SMR" id="A6U3U4"/>
<dbReference type="KEGG" id="sah:SaurJH1_2287"/>
<dbReference type="HOGENOM" id="CLU_014673_0_1_9"/>
<dbReference type="GO" id="GO:0003723">
    <property type="term" value="F:RNA binding"/>
    <property type="evidence" value="ECO:0007669"/>
    <property type="project" value="InterPro"/>
</dbReference>
<dbReference type="GO" id="GO:0160147">
    <property type="term" value="F:tRNA pseudouridine(38-40) synthase activity"/>
    <property type="evidence" value="ECO:0007669"/>
    <property type="project" value="UniProtKB-EC"/>
</dbReference>
<dbReference type="GO" id="GO:0031119">
    <property type="term" value="P:tRNA pseudouridine synthesis"/>
    <property type="evidence" value="ECO:0007669"/>
    <property type="project" value="UniProtKB-UniRule"/>
</dbReference>
<dbReference type="CDD" id="cd02570">
    <property type="entry name" value="PseudoU_synth_EcTruA"/>
    <property type="match status" value="1"/>
</dbReference>
<dbReference type="FunFam" id="3.30.70.580:FF:000001">
    <property type="entry name" value="tRNA pseudouridine synthase A"/>
    <property type="match status" value="1"/>
</dbReference>
<dbReference type="Gene3D" id="3.30.70.660">
    <property type="entry name" value="Pseudouridine synthase I, catalytic domain, C-terminal subdomain"/>
    <property type="match status" value="1"/>
</dbReference>
<dbReference type="Gene3D" id="3.30.70.580">
    <property type="entry name" value="Pseudouridine synthase I, catalytic domain, N-terminal subdomain"/>
    <property type="match status" value="1"/>
</dbReference>
<dbReference type="HAMAP" id="MF_00171">
    <property type="entry name" value="TruA"/>
    <property type="match status" value="1"/>
</dbReference>
<dbReference type="InterPro" id="IPR020103">
    <property type="entry name" value="PsdUridine_synth_cat_dom_sf"/>
</dbReference>
<dbReference type="InterPro" id="IPR001406">
    <property type="entry name" value="PsdUridine_synth_TruA"/>
</dbReference>
<dbReference type="InterPro" id="IPR020097">
    <property type="entry name" value="PsdUridine_synth_TruA_a/b_dom"/>
</dbReference>
<dbReference type="InterPro" id="IPR020095">
    <property type="entry name" value="PsdUridine_synth_TruA_C"/>
</dbReference>
<dbReference type="InterPro" id="IPR020094">
    <property type="entry name" value="TruA/RsuA/RluB/E/F_N"/>
</dbReference>
<dbReference type="NCBIfam" id="TIGR00071">
    <property type="entry name" value="hisT_truA"/>
    <property type="match status" value="1"/>
</dbReference>
<dbReference type="PANTHER" id="PTHR11142">
    <property type="entry name" value="PSEUDOURIDYLATE SYNTHASE"/>
    <property type="match status" value="1"/>
</dbReference>
<dbReference type="PANTHER" id="PTHR11142:SF0">
    <property type="entry name" value="TRNA PSEUDOURIDINE SYNTHASE-LIKE 1"/>
    <property type="match status" value="1"/>
</dbReference>
<dbReference type="Pfam" id="PF01416">
    <property type="entry name" value="PseudoU_synth_1"/>
    <property type="match status" value="2"/>
</dbReference>
<dbReference type="PIRSF" id="PIRSF001430">
    <property type="entry name" value="tRNA_psdUrid_synth"/>
    <property type="match status" value="1"/>
</dbReference>
<dbReference type="SUPFAM" id="SSF55120">
    <property type="entry name" value="Pseudouridine synthase"/>
    <property type="match status" value="1"/>
</dbReference>
<keyword id="KW-0413">Isomerase</keyword>
<keyword id="KW-0819">tRNA processing</keyword>
<sequence length="267" mass="31352">MRILVEIAYQGNNFLGFQIQQNGRTVQQQFEKLLQRMHKRHVRIHPSSRTDRGVHAIQQYFHFDTELNIPMSQWQYAMNRTLPDDIYVNNVVTVDDDFHCRYDCVGKRYRYKVYQAQHRDPFQSGLKTFIPETLDLDKMNRAAQQFIGTHDFTGFCSQKTEVESKVRTLYQSEIVKTDDGFDYIVTGSGFLYNMVRVLVAFLIEVGKGRHEISDVPKLLESKNRKNVPFTAPAEGLYLEKIYLDENELLKDFGNDIKIHRKKSLQND</sequence>
<accession>A6U3U4</accession>